<organism>
    <name type="scientific">Clostridium acetobutylicum (strain ATCC 824 / DSM 792 / JCM 1419 / IAM 19013 / LMG 5710 / NBRC 13948 / NRRL B-527 / VKM B-1787 / 2291 / W)</name>
    <dbReference type="NCBI Taxonomy" id="272562"/>
    <lineage>
        <taxon>Bacteria</taxon>
        <taxon>Bacillati</taxon>
        <taxon>Bacillota</taxon>
        <taxon>Clostridia</taxon>
        <taxon>Eubacteriales</taxon>
        <taxon>Clostridiaceae</taxon>
        <taxon>Clostridium</taxon>
    </lineage>
</organism>
<comment type="function">
    <text evidence="1">Part of a stress-induced multi-chaperone system, it is involved in the recovery of the cell from heat-induced damage, in cooperation with DnaK, DnaJ and GrpE. Acts before DnaK, in the processing of protein aggregates. Protein binding stimulates the ATPase activity; ATP hydrolysis unfolds the denatured protein aggregates, which probably helps expose new hydrophobic binding sites on the surface of ClpB-bound aggregates, contributing to the solubilization and refolding of denatured protein aggregates by DnaK (By similarity).</text>
</comment>
<comment type="subunit">
    <text evidence="1">Homohexamer. The oligomerization is ATP-dependent (By similarity).</text>
</comment>
<comment type="subcellular location">
    <subcellularLocation>
        <location evidence="3">Cytoplasm</location>
    </subcellularLocation>
</comment>
<comment type="domain">
    <text evidence="1">The Clp repeat (R) domain probably functions as a substrate-discriminating domain, recruiting aggregated proteins to the ClpB hexamer and/or stabilizing bound proteins. The NBD2 domain is responsible for oligomerization, whereas the NBD1 domain stabilizes the hexamer probably in an ATP-dependent manner. The movement of the coiled-coil domain is essential for ClpB ability to rescue proteins from an aggregated state, probably by pulling apart large aggregated proteins, which are bound between the coiled-coils motifs of adjacent ClpB subunits in the functional hexamer (By similarity).</text>
</comment>
<comment type="similarity">
    <text evidence="3">Belongs to the ClpA/ClpB family.</text>
</comment>
<keyword id="KW-0067">ATP-binding</keyword>
<keyword id="KW-0143">Chaperone</keyword>
<keyword id="KW-0175">Coiled coil</keyword>
<keyword id="KW-0963">Cytoplasm</keyword>
<keyword id="KW-0547">Nucleotide-binding</keyword>
<keyword id="KW-1185">Reference proteome</keyword>
<keyword id="KW-0677">Repeat</keyword>
<keyword id="KW-0346">Stress response</keyword>
<reference key="1">
    <citation type="journal article" date="2001" name="J. Bacteriol.">
        <title>Genome sequence and comparative analysis of the solvent-producing bacterium Clostridium acetobutylicum.</title>
        <authorList>
            <person name="Noelling J."/>
            <person name="Breton G."/>
            <person name="Omelchenko M.V."/>
            <person name="Makarova K.S."/>
            <person name="Zeng Q."/>
            <person name="Gibson R."/>
            <person name="Lee H.M."/>
            <person name="Dubois J."/>
            <person name="Qiu D."/>
            <person name="Hitti J."/>
            <person name="Wolf Y.I."/>
            <person name="Tatusov R.L."/>
            <person name="Sabathe F."/>
            <person name="Doucette-Stamm L.A."/>
            <person name="Soucaille P."/>
            <person name="Daly M.J."/>
            <person name="Bennett G.N."/>
            <person name="Koonin E.V."/>
            <person name="Smith D.R."/>
        </authorList>
    </citation>
    <scope>NUCLEOTIDE SEQUENCE [LARGE SCALE GENOMIC DNA]</scope>
    <source>
        <strain>ATCC 824 / DSM 792 / JCM 1419 / IAM 19013 / LMG 5710 / NBRC 13948 / NRRL B-527 / VKM B-1787 / 2291 / W</strain>
    </source>
</reference>
<protein>
    <recommendedName>
        <fullName>Chaperone protein ClpB</fullName>
    </recommendedName>
</protein>
<proteinExistence type="inferred from homology"/>
<dbReference type="EMBL" id="AE001437">
    <property type="protein sequence ID" value="AAK78935.1"/>
    <property type="molecule type" value="Genomic_DNA"/>
</dbReference>
<dbReference type="PIR" id="D97018">
    <property type="entry name" value="D97018"/>
</dbReference>
<dbReference type="RefSeq" id="NP_347595.1">
    <property type="nucleotide sequence ID" value="NC_003030.1"/>
</dbReference>
<dbReference type="RefSeq" id="WP_010964277.1">
    <property type="nucleotide sequence ID" value="NC_003030.1"/>
</dbReference>
<dbReference type="SMR" id="Q97KG0"/>
<dbReference type="STRING" id="272562.CA_C0959"/>
<dbReference type="GeneID" id="44997469"/>
<dbReference type="KEGG" id="cac:CA_C0959"/>
<dbReference type="PATRIC" id="fig|272562.8.peg.1168"/>
<dbReference type="eggNOG" id="COG0542">
    <property type="taxonomic scope" value="Bacteria"/>
</dbReference>
<dbReference type="HOGENOM" id="CLU_005070_4_0_9"/>
<dbReference type="OrthoDB" id="9803641at2"/>
<dbReference type="Proteomes" id="UP000000814">
    <property type="component" value="Chromosome"/>
</dbReference>
<dbReference type="GO" id="GO:0005737">
    <property type="term" value="C:cytoplasm"/>
    <property type="evidence" value="ECO:0007669"/>
    <property type="project" value="UniProtKB-SubCell"/>
</dbReference>
<dbReference type="GO" id="GO:0005524">
    <property type="term" value="F:ATP binding"/>
    <property type="evidence" value="ECO:0007669"/>
    <property type="project" value="UniProtKB-KW"/>
</dbReference>
<dbReference type="GO" id="GO:0016887">
    <property type="term" value="F:ATP hydrolysis activity"/>
    <property type="evidence" value="ECO:0007669"/>
    <property type="project" value="InterPro"/>
</dbReference>
<dbReference type="GO" id="GO:0034605">
    <property type="term" value="P:cellular response to heat"/>
    <property type="evidence" value="ECO:0007669"/>
    <property type="project" value="TreeGrafter"/>
</dbReference>
<dbReference type="GO" id="GO:0042026">
    <property type="term" value="P:protein refolding"/>
    <property type="evidence" value="ECO:0007669"/>
    <property type="project" value="InterPro"/>
</dbReference>
<dbReference type="CDD" id="cd00009">
    <property type="entry name" value="AAA"/>
    <property type="match status" value="1"/>
</dbReference>
<dbReference type="CDD" id="cd19499">
    <property type="entry name" value="RecA-like_ClpB_Hsp104-like"/>
    <property type="match status" value="1"/>
</dbReference>
<dbReference type="FunFam" id="3.40.50.300:FF:000120">
    <property type="entry name" value="ATP-dependent chaperone ClpB"/>
    <property type="match status" value="1"/>
</dbReference>
<dbReference type="FunFam" id="3.40.50.300:FF:000025">
    <property type="entry name" value="ATP-dependent Clp protease subunit"/>
    <property type="match status" value="1"/>
</dbReference>
<dbReference type="FunFam" id="3.40.50.300:FF:000010">
    <property type="entry name" value="Chaperone clpB 1, putative"/>
    <property type="match status" value="1"/>
</dbReference>
<dbReference type="Gene3D" id="1.10.8.60">
    <property type="match status" value="1"/>
</dbReference>
<dbReference type="Gene3D" id="1.10.1780.10">
    <property type="entry name" value="Clp, N-terminal domain"/>
    <property type="match status" value="1"/>
</dbReference>
<dbReference type="Gene3D" id="3.40.50.300">
    <property type="entry name" value="P-loop containing nucleotide triphosphate hydrolases"/>
    <property type="match status" value="3"/>
</dbReference>
<dbReference type="InterPro" id="IPR003593">
    <property type="entry name" value="AAA+_ATPase"/>
</dbReference>
<dbReference type="InterPro" id="IPR003959">
    <property type="entry name" value="ATPase_AAA_core"/>
</dbReference>
<dbReference type="InterPro" id="IPR017730">
    <property type="entry name" value="Chaperonin_ClpB"/>
</dbReference>
<dbReference type="InterPro" id="IPR019489">
    <property type="entry name" value="Clp_ATPase_C"/>
</dbReference>
<dbReference type="InterPro" id="IPR036628">
    <property type="entry name" value="Clp_N_dom_sf"/>
</dbReference>
<dbReference type="InterPro" id="IPR004176">
    <property type="entry name" value="Clp_R_dom"/>
</dbReference>
<dbReference type="InterPro" id="IPR001270">
    <property type="entry name" value="ClpA/B"/>
</dbReference>
<dbReference type="InterPro" id="IPR018368">
    <property type="entry name" value="ClpA/B_CS1"/>
</dbReference>
<dbReference type="InterPro" id="IPR028299">
    <property type="entry name" value="ClpA/B_CS2"/>
</dbReference>
<dbReference type="InterPro" id="IPR041546">
    <property type="entry name" value="ClpA/ClpB_AAA_lid"/>
</dbReference>
<dbReference type="InterPro" id="IPR050130">
    <property type="entry name" value="ClpA_ClpB"/>
</dbReference>
<dbReference type="InterPro" id="IPR027417">
    <property type="entry name" value="P-loop_NTPase"/>
</dbReference>
<dbReference type="NCBIfam" id="TIGR03346">
    <property type="entry name" value="chaperone_ClpB"/>
    <property type="match status" value="1"/>
</dbReference>
<dbReference type="PANTHER" id="PTHR11638">
    <property type="entry name" value="ATP-DEPENDENT CLP PROTEASE"/>
    <property type="match status" value="1"/>
</dbReference>
<dbReference type="PANTHER" id="PTHR11638:SF18">
    <property type="entry name" value="HEAT SHOCK PROTEIN 104"/>
    <property type="match status" value="1"/>
</dbReference>
<dbReference type="Pfam" id="PF00004">
    <property type="entry name" value="AAA"/>
    <property type="match status" value="1"/>
</dbReference>
<dbReference type="Pfam" id="PF07724">
    <property type="entry name" value="AAA_2"/>
    <property type="match status" value="1"/>
</dbReference>
<dbReference type="Pfam" id="PF17871">
    <property type="entry name" value="AAA_lid_9"/>
    <property type="match status" value="1"/>
</dbReference>
<dbReference type="Pfam" id="PF02861">
    <property type="entry name" value="Clp_N"/>
    <property type="match status" value="2"/>
</dbReference>
<dbReference type="Pfam" id="PF10431">
    <property type="entry name" value="ClpB_D2-small"/>
    <property type="match status" value="1"/>
</dbReference>
<dbReference type="PRINTS" id="PR00300">
    <property type="entry name" value="CLPPROTEASEA"/>
</dbReference>
<dbReference type="SMART" id="SM00382">
    <property type="entry name" value="AAA"/>
    <property type="match status" value="2"/>
</dbReference>
<dbReference type="SMART" id="SM01086">
    <property type="entry name" value="ClpB_D2-small"/>
    <property type="match status" value="1"/>
</dbReference>
<dbReference type="SUPFAM" id="SSF81923">
    <property type="entry name" value="Double Clp-N motif"/>
    <property type="match status" value="1"/>
</dbReference>
<dbReference type="SUPFAM" id="SSF52540">
    <property type="entry name" value="P-loop containing nucleoside triphosphate hydrolases"/>
    <property type="match status" value="2"/>
</dbReference>
<dbReference type="PROSITE" id="PS51903">
    <property type="entry name" value="CLP_R"/>
    <property type="match status" value="1"/>
</dbReference>
<dbReference type="PROSITE" id="PS00870">
    <property type="entry name" value="CLPAB_1"/>
    <property type="match status" value="1"/>
</dbReference>
<dbReference type="PROSITE" id="PS00871">
    <property type="entry name" value="CLPAB_2"/>
    <property type="match status" value="1"/>
</dbReference>
<accession>Q97KG0</accession>
<gene>
    <name type="primary">clpB</name>
    <name type="ordered locus">CA_C0959</name>
</gene>
<feature type="chain" id="PRO_0000191111" description="Chaperone protein ClpB">
    <location>
        <begin position="1"/>
        <end position="865"/>
    </location>
</feature>
<feature type="domain" description="Clp R" evidence="2">
    <location>
        <begin position="3"/>
        <end position="150"/>
    </location>
</feature>
<feature type="region of interest" description="Repeat 1" evidence="2">
    <location>
        <begin position="6"/>
        <end position="71"/>
    </location>
</feature>
<feature type="region of interest" description="Repeat 2" evidence="2">
    <location>
        <begin position="86"/>
        <end position="150"/>
    </location>
</feature>
<feature type="region of interest" description="NBD1" evidence="1">
    <location>
        <begin position="163"/>
        <end position="344"/>
    </location>
</feature>
<feature type="region of interest" description="Linker" evidence="1">
    <location>
        <begin position="345"/>
        <end position="551"/>
    </location>
</feature>
<feature type="region of interest" description="NBD2" evidence="1">
    <location>
        <begin position="561"/>
        <end position="772"/>
    </location>
</feature>
<feature type="region of interest" description="C-terminal" evidence="1">
    <location>
        <begin position="773"/>
        <end position="865"/>
    </location>
</feature>
<feature type="coiled-coil region" evidence="1">
    <location>
        <begin position="395"/>
        <end position="529"/>
    </location>
</feature>
<feature type="binding site" evidence="1">
    <location>
        <begin position="210"/>
        <end position="217"/>
    </location>
    <ligand>
        <name>ATP</name>
        <dbReference type="ChEBI" id="CHEBI:30616"/>
        <label>1</label>
    </ligand>
</feature>
<feature type="binding site" evidence="1">
    <location>
        <begin position="611"/>
        <end position="618"/>
    </location>
    <ligand>
        <name>ATP</name>
        <dbReference type="ChEBI" id="CHEBI:30616"/>
        <label>2</label>
    </ligand>
</feature>
<name>CLPB_CLOAB</name>
<sequence>MDVDKLTLKVQQAINDCQTIAVRYNHQQIDTIHLFMAIISQEDGLIPNILGKMGADVETVKRDTEAELDRMPKVLGEGAQNASIYATRRFEEVFVRGEKISRDFKDLYISVEHVMLALMDIDSGAIKSILDKNNISKKEFLKALREVRGNQRVDTSDPEGTYDALNKYGRDLVKDAKKHKLDPVIGRDEEIRRVIRILSRRTKNNPVLIGEPGVGKTAIVEGLAERIVRGDVPEGLKNKIIFSLDMGSLVAGAKYRGEFEERLKAVLKEVERSEGKIILFIDEIHTIVGAGKTEGAMDAGNIIKPMLARGELHCIGATTFDEYRKYIEKDKALERRFQKVQIDEPTVDDAISILRGLKERFEIHHGVRIHDNAIVAAAKLSDRYITGRFLPDKAIDLIDEAGAMVRMEIDSMPTELDMLKRKIFQMEIEKEALSKESDKFSRERLESIQKELSDLKDKDKAMTAKYDKEKAQIQGIKELKTKLDEIRGQIEKAEREYDLNKAAELKYGEVPKLEHEIEEKENLIKQNGQNAMLKEEVTEEQVSNIVSKWTGIPVSKLVEGERNKLMRLSDELEKRVVGQTEAVKSVADAVIRARAGLKDMSKPIGSFIFLGPTGVGKTELAKTLARVMFDSEDNIIRIDMSEYMEKYSVSRLIGSPPGYVGYEEGGQLTEAVRRKPYSVILFDEIEKAHSDVFNIFLQIFDDGRLTDNKGNTIDFKNSIIIMTSNIGSEHLLNNKGVSNVDEETKDKVMNELKGRFKPEFLNRLDDIIMFKPLSINEIGKIIDIFLENIKSKLKEKNIKIDIAEEAKKIIAEEGYDPVYGARPLKRYIENTIETHIAKMFISGEISEGDILKIEGSDSKLTIVKK</sequence>
<evidence type="ECO:0000250" key="1"/>
<evidence type="ECO:0000255" key="2">
    <source>
        <dbReference type="PROSITE-ProRule" id="PRU01251"/>
    </source>
</evidence>
<evidence type="ECO:0000305" key="3"/>